<evidence type="ECO:0000250" key="1"/>
<evidence type="ECO:0000269" key="2">
    <source>
    </source>
</evidence>
<evidence type="ECO:0000305" key="3"/>
<evidence type="ECO:0000305" key="4">
    <source>
    </source>
</evidence>
<sequence>MAMANLARRKGYAVVLSSRSSLCLTRWRGFASGSDENDVVVIGGGPGGYVAAIKAAQLGLKTTCIEKRGTLGGTCLNVGCIPSKALLHSSHMYHEAKHAFANHGVKFSSVEVALPAMMGQKDKAVSNLTQGIDGLFQKNKVTYVKGYGKLVSPSEISVDTTEGENTVVKGKHIIIATGSDVKSLPGVTIDEKKIVSSTGALALSEIPKKLVVIGAGYIGLEMGSVWGRIGSEVTVVEFASEIVPTMDADIRKQFQRSLEKQGMKFKLKTKVVGVDTSGDGVKLTVEPSAGGEQTIIEADVVLVSAGRTPFTSGLNLDKIGVETDKLGRILVNERFSTNVSGVYAIGDVIPGPMLAHKAEEDGVACVEYLTGKVGHVDYDKVPGVVYTNPEVASVGKTEEQVKETGVEYRVGKFPFLANSRAKAIDNAEGLVKIIAEKETDKILGVHIMAPNAGELIHEAAIALQYDASSEDIARVCHAHPTMSEAVKEAAMATYDKPHSHLKSWLLLSSLVFIFVQEFTMTWR</sequence>
<accession>Q41219</accession>
<proteinExistence type="evidence at protein level"/>
<keyword id="KW-0903">Direct protein sequencing</keyword>
<keyword id="KW-1015">Disulfide bond</keyword>
<keyword id="KW-0274">FAD</keyword>
<keyword id="KW-0285">Flavoprotein</keyword>
<keyword id="KW-0496">Mitochondrion</keyword>
<keyword id="KW-0520">NAD</keyword>
<keyword id="KW-0560">Oxidoreductase</keyword>
<keyword id="KW-0676">Redox-active center</keyword>
<keyword id="KW-1185">Reference proteome</keyword>
<keyword id="KW-0809">Transit peptide</keyword>
<gene>
    <name type="primary">FLBR</name>
</gene>
<reference key="1">
    <citation type="journal article" date="1994" name="Plant Physiol.">
        <title>Cloning and sequence analysis of a cDNA encoding ferric leghemoglobin reductase from soybean nodules.</title>
        <authorList>
            <person name="Ji L."/>
            <person name="Becana M."/>
            <person name="Sarath G."/>
            <person name="Klucas R.V."/>
        </authorList>
    </citation>
    <scope>NUCLEOTIDE SEQUENCE [MRNA]</scope>
    <scope>PROTEIN SEQUENCE OF 31-80</scope>
    <scope>FUNCTION</scope>
    <scope>TISSUE SPECIFICITY</scope>
    <scope>SUBCELLULAR LOCATION</scope>
</reference>
<organism>
    <name type="scientific">Glycine max</name>
    <name type="common">Soybean</name>
    <name type="synonym">Glycine hispida</name>
    <dbReference type="NCBI Taxonomy" id="3847"/>
    <lineage>
        <taxon>Eukaryota</taxon>
        <taxon>Viridiplantae</taxon>
        <taxon>Streptophyta</taxon>
        <taxon>Embryophyta</taxon>
        <taxon>Tracheophyta</taxon>
        <taxon>Spermatophyta</taxon>
        <taxon>Magnoliopsida</taxon>
        <taxon>eudicotyledons</taxon>
        <taxon>Gunneridae</taxon>
        <taxon>Pentapetalae</taxon>
        <taxon>rosids</taxon>
        <taxon>fabids</taxon>
        <taxon>Fabales</taxon>
        <taxon>Fabaceae</taxon>
        <taxon>Papilionoideae</taxon>
        <taxon>50 kb inversion clade</taxon>
        <taxon>NPAAA clade</taxon>
        <taxon>indigoferoid/millettioid clade</taxon>
        <taxon>Phaseoleae</taxon>
        <taxon>Glycine</taxon>
        <taxon>Glycine subgen. Soja</taxon>
    </lineage>
</organism>
<feature type="transit peptide" description="Mitochondrion" evidence="2">
    <location>
        <begin position="1"/>
        <end position="30"/>
    </location>
</feature>
<feature type="chain" id="PRO_0000424137" description="Leghemoglobin reductase">
    <location>
        <begin position="31"/>
        <end position="523"/>
    </location>
</feature>
<feature type="active site" description="Proton acceptor" evidence="1">
    <location>
        <position position="479"/>
    </location>
</feature>
<feature type="binding site" evidence="1">
    <location>
        <begin position="66"/>
        <end position="75"/>
    </location>
    <ligand>
        <name>FAD</name>
        <dbReference type="ChEBI" id="CHEBI:57692"/>
    </ligand>
</feature>
<feature type="binding site" evidence="1">
    <location>
        <position position="84"/>
    </location>
    <ligand>
        <name>FAD</name>
        <dbReference type="ChEBI" id="CHEBI:57692"/>
    </ligand>
</feature>
<feature type="binding site" evidence="1">
    <location>
        <position position="148"/>
    </location>
    <ligand>
        <name>FAD</name>
        <dbReference type="ChEBI" id="CHEBI:57692"/>
    </ligand>
</feature>
<feature type="binding site" evidence="1">
    <location>
        <begin position="177"/>
        <end position="179"/>
    </location>
    <ligand>
        <name>FAD</name>
        <dbReference type="ChEBI" id="CHEBI:57692"/>
    </ligand>
</feature>
<feature type="binding site" evidence="1">
    <location>
        <begin position="214"/>
        <end position="221"/>
    </location>
    <ligand>
        <name>NAD(+)</name>
        <dbReference type="ChEBI" id="CHEBI:57540"/>
    </ligand>
</feature>
<feature type="binding site" evidence="1">
    <location>
        <position position="237"/>
    </location>
    <ligand>
        <name>NAD(+)</name>
        <dbReference type="ChEBI" id="CHEBI:57540"/>
    </ligand>
</feature>
<feature type="binding site" evidence="1">
    <location>
        <position position="271"/>
    </location>
    <ligand>
        <name>NAD(+)</name>
        <dbReference type="ChEBI" id="CHEBI:57540"/>
    </ligand>
</feature>
<feature type="binding site" evidence="1">
    <location>
        <position position="306"/>
    </location>
    <ligand>
        <name>NAD(+)</name>
        <dbReference type="ChEBI" id="CHEBI:57540"/>
    </ligand>
</feature>
<feature type="binding site" evidence="1">
    <location>
        <position position="347"/>
    </location>
    <ligand>
        <name>FAD</name>
        <dbReference type="ChEBI" id="CHEBI:57692"/>
    </ligand>
</feature>
<feature type="binding site" evidence="1">
    <location>
        <begin position="353"/>
        <end position="356"/>
    </location>
    <ligand>
        <name>FAD</name>
        <dbReference type="ChEBI" id="CHEBI:57692"/>
    </ligand>
</feature>
<feature type="disulfide bond" description="Redox-active" evidence="1">
    <location>
        <begin position="75"/>
        <end position="80"/>
    </location>
</feature>
<dbReference type="EC" id="1.6.2.6"/>
<dbReference type="EMBL" id="S70187">
    <property type="protein sequence ID" value="AAB30526.1"/>
    <property type="molecule type" value="mRNA"/>
</dbReference>
<dbReference type="PIR" id="T08854">
    <property type="entry name" value="T08854"/>
</dbReference>
<dbReference type="RefSeq" id="NP_001238628.1">
    <property type="nucleotide sequence ID" value="NM_001251699.1"/>
</dbReference>
<dbReference type="SMR" id="Q41219"/>
<dbReference type="FunCoup" id="Q41219">
    <property type="interactions" value="5468"/>
</dbReference>
<dbReference type="STRING" id="3847.Q41219"/>
<dbReference type="PaxDb" id="3847-GLYMA07G36040.1"/>
<dbReference type="ProMEX" id="Q41219"/>
<dbReference type="GeneID" id="547832"/>
<dbReference type="eggNOG" id="KOG1335">
    <property type="taxonomic scope" value="Eukaryota"/>
</dbReference>
<dbReference type="InParanoid" id="Q41219"/>
<dbReference type="Proteomes" id="UP000008827">
    <property type="component" value="Unplaced"/>
</dbReference>
<dbReference type="GO" id="GO:0005739">
    <property type="term" value="C:mitochondrion"/>
    <property type="evidence" value="ECO:0000318"/>
    <property type="project" value="GO_Central"/>
</dbReference>
<dbReference type="GO" id="GO:0045252">
    <property type="term" value="C:oxoglutarate dehydrogenase complex"/>
    <property type="evidence" value="ECO:0000318"/>
    <property type="project" value="GO_Central"/>
</dbReference>
<dbReference type="GO" id="GO:0004148">
    <property type="term" value="F:dihydrolipoyl dehydrogenase (NADH) activity"/>
    <property type="evidence" value="ECO:0000318"/>
    <property type="project" value="GO_Central"/>
</dbReference>
<dbReference type="GO" id="GO:0050660">
    <property type="term" value="F:flavin adenine dinucleotide binding"/>
    <property type="evidence" value="ECO:0000318"/>
    <property type="project" value="GO_Central"/>
</dbReference>
<dbReference type="GO" id="GO:0015043">
    <property type="term" value="F:leghemoglobin reductase [NAD(P)H] activity"/>
    <property type="evidence" value="ECO:0007669"/>
    <property type="project" value="UniProtKB-EC"/>
</dbReference>
<dbReference type="GO" id="GO:0006103">
    <property type="term" value="P:2-oxoglutarate metabolic process"/>
    <property type="evidence" value="ECO:0000318"/>
    <property type="project" value="GO_Central"/>
</dbReference>
<dbReference type="GO" id="GO:0006090">
    <property type="term" value="P:pyruvate metabolic process"/>
    <property type="evidence" value="ECO:0000318"/>
    <property type="project" value="GO_Central"/>
</dbReference>
<dbReference type="FunFam" id="3.30.390.30:FF:000001">
    <property type="entry name" value="Dihydrolipoyl dehydrogenase"/>
    <property type="match status" value="1"/>
</dbReference>
<dbReference type="FunFam" id="3.50.50.60:FF:000001">
    <property type="entry name" value="Dihydrolipoyl dehydrogenase, mitochondrial"/>
    <property type="match status" value="1"/>
</dbReference>
<dbReference type="Gene3D" id="3.30.390.30">
    <property type="match status" value="1"/>
</dbReference>
<dbReference type="Gene3D" id="3.50.50.60">
    <property type="entry name" value="FAD/NAD(P)-binding domain"/>
    <property type="match status" value="2"/>
</dbReference>
<dbReference type="InterPro" id="IPR050151">
    <property type="entry name" value="Class-I_Pyr_Nuc-Dis_Oxidored"/>
</dbReference>
<dbReference type="InterPro" id="IPR036188">
    <property type="entry name" value="FAD/NAD-bd_sf"/>
</dbReference>
<dbReference type="InterPro" id="IPR023753">
    <property type="entry name" value="FAD/NAD-binding_dom"/>
</dbReference>
<dbReference type="InterPro" id="IPR016156">
    <property type="entry name" value="FAD/NAD-linked_Rdtase_dimer_sf"/>
</dbReference>
<dbReference type="InterPro" id="IPR006258">
    <property type="entry name" value="Lipoamide_DH"/>
</dbReference>
<dbReference type="InterPro" id="IPR001100">
    <property type="entry name" value="Pyr_nuc-diS_OxRdtase"/>
</dbReference>
<dbReference type="InterPro" id="IPR004099">
    <property type="entry name" value="Pyr_nucl-diS_OxRdtase_dimer"/>
</dbReference>
<dbReference type="InterPro" id="IPR012999">
    <property type="entry name" value="Pyr_OxRdtase_I_AS"/>
</dbReference>
<dbReference type="NCBIfam" id="TIGR01350">
    <property type="entry name" value="lipoamide_DH"/>
    <property type="match status" value="1"/>
</dbReference>
<dbReference type="PANTHER" id="PTHR22912">
    <property type="entry name" value="DISULFIDE OXIDOREDUCTASE"/>
    <property type="match status" value="1"/>
</dbReference>
<dbReference type="PANTHER" id="PTHR22912:SF220">
    <property type="entry name" value="LEGHEMOGLOBIN REDUCTASE"/>
    <property type="match status" value="1"/>
</dbReference>
<dbReference type="Pfam" id="PF07992">
    <property type="entry name" value="Pyr_redox_2"/>
    <property type="match status" value="1"/>
</dbReference>
<dbReference type="Pfam" id="PF02852">
    <property type="entry name" value="Pyr_redox_dim"/>
    <property type="match status" value="1"/>
</dbReference>
<dbReference type="PIRSF" id="PIRSF000350">
    <property type="entry name" value="Mercury_reductase_MerA"/>
    <property type="match status" value="1"/>
</dbReference>
<dbReference type="PRINTS" id="PR00368">
    <property type="entry name" value="FADPNR"/>
</dbReference>
<dbReference type="PRINTS" id="PR00411">
    <property type="entry name" value="PNDRDTASEI"/>
</dbReference>
<dbReference type="SUPFAM" id="SSF51905">
    <property type="entry name" value="FAD/NAD(P)-binding domain"/>
    <property type="match status" value="1"/>
</dbReference>
<dbReference type="SUPFAM" id="SSF55424">
    <property type="entry name" value="FAD/NAD-linked reductases, dimerisation (C-terminal) domain"/>
    <property type="match status" value="1"/>
</dbReference>
<dbReference type="PROSITE" id="PS00076">
    <property type="entry name" value="PYRIDINE_REDOX_1"/>
    <property type="match status" value="1"/>
</dbReference>
<name>LEGRE_SOYBN</name>
<protein>
    <recommendedName>
        <fullName>Leghemoglobin reductase</fullName>
        <ecNumber>1.6.2.6</ecNumber>
    </recommendedName>
    <alternativeName>
        <fullName>Ferric leghemoglobin reductase</fullName>
        <shortName>FLbR</shortName>
    </alternativeName>
</protein>
<comment type="function">
    <text evidence="2">Reduces ferric leghemoglobin (Lb) to ferrous Lb.</text>
</comment>
<comment type="catalytic activity">
    <reaction>
        <text>2 Fe(III)-[leghemoglobin] + NADH = 2 Fe(II)-[leghemoglobin] + NAD(+) + H(+)</text>
        <dbReference type="Rhea" id="RHEA:16161"/>
        <dbReference type="Rhea" id="RHEA-COMP:13792"/>
        <dbReference type="Rhea" id="RHEA-COMP:13793"/>
        <dbReference type="ChEBI" id="CHEBI:15378"/>
        <dbReference type="ChEBI" id="CHEBI:29033"/>
        <dbReference type="ChEBI" id="CHEBI:29034"/>
        <dbReference type="ChEBI" id="CHEBI:57540"/>
        <dbReference type="ChEBI" id="CHEBI:57945"/>
        <dbReference type="EC" id="1.6.2.6"/>
    </reaction>
</comment>
<comment type="catalytic activity">
    <reaction>
        <text>2 Fe(III)-[leghemoglobin] + NADPH = 2 Fe(II)-[leghemoglobin] + NADP(+) + H(+)</text>
        <dbReference type="Rhea" id="RHEA:16157"/>
        <dbReference type="Rhea" id="RHEA-COMP:13792"/>
        <dbReference type="Rhea" id="RHEA-COMP:13793"/>
        <dbReference type="ChEBI" id="CHEBI:15378"/>
        <dbReference type="ChEBI" id="CHEBI:29033"/>
        <dbReference type="ChEBI" id="CHEBI:29034"/>
        <dbReference type="ChEBI" id="CHEBI:57783"/>
        <dbReference type="ChEBI" id="CHEBI:58349"/>
        <dbReference type="EC" id="1.6.2.6"/>
    </reaction>
</comment>
<comment type="cofactor">
    <cofactor evidence="1">
        <name>FAD</name>
        <dbReference type="ChEBI" id="CHEBI:57692"/>
    </cofactor>
    <text evidence="1">Binds 1 FAD per subunit.</text>
</comment>
<comment type="subunit">
    <text evidence="1">Homodimer.</text>
</comment>
<comment type="subcellular location">
    <subcellularLocation>
        <location evidence="4">Mitochondrion</location>
    </subcellularLocation>
</comment>
<comment type="tissue specificity">
    <text evidence="2">Widely expressed. Expressed at higher level in leaf and nodules.</text>
</comment>
<comment type="similarity">
    <text evidence="3">Belongs to the class-I pyridine nucleotide-disulfide oxidoreductase family.</text>
</comment>